<keyword id="KW-0030">Aminoacyl-tRNA synthetase</keyword>
<keyword id="KW-0067">ATP-binding</keyword>
<keyword id="KW-0963">Cytoplasm</keyword>
<keyword id="KW-0436">Ligase</keyword>
<keyword id="KW-0547">Nucleotide-binding</keyword>
<keyword id="KW-0648">Protein biosynthesis</keyword>
<keyword id="KW-1185">Reference proteome</keyword>
<proteinExistence type="inferred from homology"/>
<organism>
    <name type="scientific">Nanoarchaeum equitans (strain Kin4-M)</name>
    <dbReference type="NCBI Taxonomy" id="228908"/>
    <lineage>
        <taxon>Archaea</taxon>
        <taxon>Nanobdellota</taxon>
        <taxon>Candidatus Nanoarchaeia</taxon>
        <taxon>Nanoarchaeales</taxon>
        <taxon>Nanoarchaeaceae</taxon>
        <taxon>Nanoarchaeum</taxon>
    </lineage>
</organism>
<evidence type="ECO:0000255" key="1">
    <source>
        <dbReference type="HAMAP-Rule" id="MF_00127"/>
    </source>
</evidence>
<gene>
    <name evidence="1" type="primary">hisS</name>
    <name type="ordered locus">NEQ102</name>
</gene>
<name>SYH_NANEQ</name>
<reference key="1">
    <citation type="journal article" date="2003" name="Proc. Natl. Acad. Sci. U.S.A.">
        <title>The genome of Nanoarchaeum equitans: insights into early archaeal evolution and derived parasitism.</title>
        <authorList>
            <person name="Waters E."/>
            <person name="Hohn M.J."/>
            <person name="Ahel I."/>
            <person name="Graham D.E."/>
            <person name="Adams M.D."/>
            <person name="Barnstead M."/>
            <person name="Beeson K.Y."/>
            <person name="Bibbs L."/>
            <person name="Bolanos R."/>
            <person name="Keller M."/>
            <person name="Kretz K."/>
            <person name="Lin X."/>
            <person name="Mathur E."/>
            <person name="Ni J."/>
            <person name="Podar M."/>
            <person name="Richardson T."/>
            <person name="Sutton G.G."/>
            <person name="Simon M."/>
            <person name="Soell D."/>
            <person name="Stetter K.O."/>
            <person name="Short J.M."/>
            <person name="Noorderwier M."/>
        </authorList>
    </citation>
    <scope>NUCLEOTIDE SEQUENCE [LARGE SCALE GENOMIC DNA]</scope>
    <source>
        <strain>Kin4-M</strain>
    </source>
</reference>
<protein>
    <recommendedName>
        <fullName evidence="1">Histidine--tRNA ligase</fullName>
        <ecNumber evidence="1">6.1.1.21</ecNumber>
    </recommendedName>
    <alternativeName>
        <fullName evidence="1">Histidyl-tRNA synthetase</fullName>
        <shortName evidence="1">HisRS</shortName>
    </alternativeName>
</protein>
<dbReference type="EC" id="6.1.1.21" evidence="1"/>
<dbReference type="EMBL" id="AE017199">
    <property type="protein sequence ID" value="AAR38959.1"/>
    <property type="molecule type" value="Genomic_DNA"/>
</dbReference>
<dbReference type="SMR" id="P60922"/>
<dbReference type="STRING" id="228908.NEQ102"/>
<dbReference type="EnsemblBacteria" id="AAR38959">
    <property type="protein sequence ID" value="AAR38959"/>
    <property type="gene ID" value="NEQ102"/>
</dbReference>
<dbReference type="KEGG" id="neq:NEQ102"/>
<dbReference type="PATRIC" id="fig|228908.8.peg.109"/>
<dbReference type="HOGENOM" id="CLU_025113_3_0_2"/>
<dbReference type="Proteomes" id="UP000000578">
    <property type="component" value="Chromosome"/>
</dbReference>
<dbReference type="GO" id="GO:0005829">
    <property type="term" value="C:cytosol"/>
    <property type="evidence" value="ECO:0007669"/>
    <property type="project" value="TreeGrafter"/>
</dbReference>
<dbReference type="GO" id="GO:0005524">
    <property type="term" value="F:ATP binding"/>
    <property type="evidence" value="ECO:0007669"/>
    <property type="project" value="UniProtKB-UniRule"/>
</dbReference>
<dbReference type="GO" id="GO:0004821">
    <property type="term" value="F:histidine-tRNA ligase activity"/>
    <property type="evidence" value="ECO:0007669"/>
    <property type="project" value="UniProtKB-UniRule"/>
</dbReference>
<dbReference type="GO" id="GO:0003723">
    <property type="term" value="F:RNA binding"/>
    <property type="evidence" value="ECO:0007669"/>
    <property type="project" value="TreeGrafter"/>
</dbReference>
<dbReference type="GO" id="GO:0006427">
    <property type="term" value="P:histidyl-tRNA aminoacylation"/>
    <property type="evidence" value="ECO:0007669"/>
    <property type="project" value="UniProtKB-UniRule"/>
</dbReference>
<dbReference type="CDD" id="cd00773">
    <property type="entry name" value="HisRS-like_core"/>
    <property type="match status" value="1"/>
</dbReference>
<dbReference type="Gene3D" id="3.40.50.800">
    <property type="entry name" value="Anticodon-binding domain"/>
    <property type="match status" value="1"/>
</dbReference>
<dbReference type="Gene3D" id="3.30.930.10">
    <property type="entry name" value="Bira Bifunctional Protein, Domain 2"/>
    <property type="match status" value="1"/>
</dbReference>
<dbReference type="HAMAP" id="MF_00127">
    <property type="entry name" value="His_tRNA_synth"/>
    <property type="match status" value="1"/>
</dbReference>
<dbReference type="InterPro" id="IPR006195">
    <property type="entry name" value="aa-tRNA-synth_II"/>
</dbReference>
<dbReference type="InterPro" id="IPR045864">
    <property type="entry name" value="aa-tRNA-synth_II/BPL/LPL"/>
</dbReference>
<dbReference type="InterPro" id="IPR004154">
    <property type="entry name" value="Anticodon-bd"/>
</dbReference>
<dbReference type="InterPro" id="IPR036621">
    <property type="entry name" value="Anticodon-bd_dom_sf"/>
</dbReference>
<dbReference type="InterPro" id="IPR015807">
    <property type="entry name" value="His-tRNA-ligase"/>
</dbReference>
<dbReference type="InterPro" id="IPR041715">
    <property type="entry name" value="HisRS-like_core"/>
</dbReference>
<dbReference type="InterPro" id="IPR004516">
    <property type="entry name" value="HisRS/HisZ"/>
</dbReference>
<dbReference type="NCBIfam" id="TIGR00442">
    <property type="entry name" value="hisS"/>
    <property type="match status" value="1"/>
</dbReference>
<dbReference type="PANTHER" id="PTHR11476:SF7">
    <property type="entry name" value="HISTIDINE--TRNA LIGASE"/>
    <property type="match status" value="1"/>
</dbReference>
<dbReference type="PANTHER" id="PTHR11476">
    <property type="entry name" value="HISTIDYL-TRNA SYNTHETASE"/>
    <property type="match status" value="1"/>
</dbReference>
<dbReference type="Pfam" id="PF03129">
    <property type="entry name" value="HGTP_anticodon"/>
    <property type="match status" value="1"/>
</dbReference>
<dbReference type="Pfam" id="PF13393">
    <property type="entry name" value="tRNA-synt_His"/>
    <property type="match status" value="1"/>
</dbReference>
<dbReference type="PIRSF" id="PIRSF001549">
    <property type="entry name" value="His-tRNA_synth"/>
    <property type="match status" value="1"/>
</dbReference>
<dbReference type="SUPFAM" id="SSF52954">
    <property type="entry name" value="Class II aaRS ABD-related"/>
    <property type="match status" value="1"/>
</dbReference>
<dbReference type="SUPFAM" id="SSF55681">
    <property type="entry name" value="Class II aaRS and biotin synthetases"/>
    <property type="match status" value="1"/>
</dbReference>
<dbReference type="PROSITE" id="PS50862">
    <property type="entry name" value="AA_TRNA_LIGASE_II"/>
    <property type="match status" value="1"/>
</dbReference>
<sequence length="404" mass="47695">MILPPRGTKDFTPELAILWKEIVSKIESVYQKYGFDPIITPIVEYWDTLKGKYGEEAEKKEIWRFRVPQSKKWYALKYDQTVPLARYFARFRPKLPFKRYTIDRTFRYDEPQKGRYREFWQADADIVGSPYPEADAEILNMMIEAYETLGFNVYLRVSDRRALESLIEKVGEKDKFIEIARIIDKWDKIGEEGVLEKLKQITDKAEKIIELLKENPEEFYPKEFWEIIDLVEKKNKIKIDIKLARGFDYYTGMVYEVWIEGFNRALGGGGRYDNLIGIFSKEKIPAVGGSIGINPLIDVGLEKGIFNLNKKTYTQIAVIYIEVFKEAWRIANKLRDLGLNVYIDLLRRDFKKQMEYVIEKDIRYLVIVGKKDLANNLVTFQDRLTRERKKIPIENLEEIKSLVQ</sequence>
<comment type="catalytic activity">
    <reaction evidence="1">
        <text>tRNA(His) + L-histidine + ATP = L-histidyl-tRNA(His) + AMP + diphosphate + H(+)</text>
        <dbReference type="Rhea" id="RHEA:17313"/>
        <dbReference type="Rhea" id="RHEA-COMP:9665"/>
        <dbReference type="Rhea" id="RHEA-COMP:9689"/>
        <dbReference type="ChEBI" id="CHEBI:15378"/>
        <dbReference type="ChEBI" id="CHEBI:30616"/>
        <dbReference type="ChEBI" id="CHEBI:33019"/>
        <dbReference type="ChEBI" id="CHEBI:57595"/>
        <dbReference type="ChEBI" id="CHEBI:78442"/>
        <dbReference type="ChEBI" id="CHEBI:78527"/>
        <dbReference type="ChEBI" id="CHEBI:456215"/>
        <dbReference type="EC" id="6.1.1.21"/>
    </reaction>
</comment>
<comment type="subcellular location">
    <subcellularLocation>
        <location evidence="1">Cytoplasm</location>
    </subcellularLocation>
</comment>
<comment type="similarity">
    <text evidence="1">Belongs to the class-II aminoacyl-tRNA synthetase family.</text>
</comment>
<feature type="chain" id="PRO_0000136317" description="Histidine--tRNA ligase">
    <location>
        <begin position="1"/>
        <end position="404"/>
    </location>
</feature>
<accession>P60922</accession>